<comment type="function">
    <text evidence="1">May be involved in the regulation of cell differentiation.</text>
</comment>
<comment type="subcellular location">
    <subcellularLocation>
        <location evidence="1">Membrane</location>
        <topology evidence="3">Multi-pass membrane protein</topology>
    </subcellularLocation>
</comment>
<comment type="similarity">
    <text evidence="3">Belongs to the tetraspanin (TM4SF) family.</text>
</comment>
<comment type="sequence caution" evidence="3">
    <conflict type="erroneous gene model prediction">
        <sequence resource="EMBL-CDS" id="CAA20462"/>
    </conflict>
</comment>
<comment type="sequence caution" evidence="3">
    <conflict type="erroneous initiation">
        <sequence resource="EMBL-CDS" id="CAA20462"/>
    </conflict>
    <text>Truncated N-terminus.</text>
</comment>
<comment type="sequence caution" evidence="3">
    <conflict type="erroneous gene model prediction">
        <sequence resource="EMBL-CDS" id="CAB79296"/>
    </conflict>
</comment>
<comment type="sequence caution" evidence="3">
    <conflict type="erroneous initiation">
        <sequence resource="EMBL-CDS" id="CAB79296"/>
    </conflict>
    <text>Truncated N-terminus.</text>
</comment>
<evidence type="ECO:0000250" key="1"/>
<evidence type="ECO:0000255" key="2"/>
<evidence type="ECO:0000305" key="3"/>
<sequence length="281" mass="31868">MNRMSNTVIGFLNILTLISSIVLLGSALWMGRSKTTCEHFLQKPLLILGLAILILSVAGLVGACCDVAWVLWVYLFFMVFIIVALMGLTLFGFIVTSHSGGVVVDGRVYKEFKLEAYHPWLKTRVVDTNYWVTIKTCLLGSVTCSKLALWTPLDYLQKDLSPLQSGCCKPPTSCVYNTDTVIQQDPDCYRWNNAATVLCYDCDTCRAGVLETVRRDWHKLSLVNVIVVIFLIAVYCVGCCAFKNAKRPQHYGFPYGRYGMSKSRPGWEQSWSRWWHGRDRY</sequence>
<keyword id="KW-0472">Membrane</keyword>
<keyword id="KW-1185">Reference proteome</keyword>
<keyword id="KW-0812">Transmembrane</keyword>
<keyword id="KW-1133">Transmembrane helix</keyword>
<feature type="chain" id="PRO_0000421045" description="Tetraspanin-5">
    <location>
        <begin position="1"/>
        <end position="281"/>
    </location>
</feature>
<feature type="topological domain" description="Cytoplasmic" evidence="2">
    <location>
        <begin position="1"/>
        <end position="7"/>
    </location>
</feature>
<feature type="transmembrane region" description="Helical" evidence="2">
    <location>
        <begin position="8"/>
        <end position="28"/>
    </location>
</feature>
<feature type="topological domain" description="Extracellular" evidence="2">
    <location>
        <begin position="29"/>
        <end position="44"/>
    </location>
</feature>
<feature type="transmembrane region" description="Helical" evidence="2">
    <location>
        <begin position="45"/>
        <end position="65"/>
    </location>
</feature>
<feature type="topological domain" description="Cytoplasmic" evidence="2">
    <location>
        <begin position="66"/>
        <end position="74"/>
    </location>
</feature>
<feature type="transmembrane region" description="Helical" evidence="2">
    <location>
        <begin position="75"/>
        <end position="95"/>
    </location>
</feature>
<feature type="topological domain" description="Extracellular" evidence="2">
    <location>
        <begin position="96"/>
        <end position="221"/>
    </location>
</feature>
<feature type="transmembrane region" description="Helical" evidence="2">
    <location>
        <begin position="222"/>
        <end position="242"/>
    </location>
</feature>
<feature type="topological domain" description="Cytoplasmic" evidence="2">
    <location>
        <begin position="243"/>
        <end position="281"/>
    </location>
</feature>
<proteinExistence type="evidence at transcript level"/>
<dbReference type="EMBL" id="AL031326">
    <property type="protein sequence ID" value="CAA20462.1"/>
    <property type="status" value="ALT_SEQ"/>
    <property type="molecule type" value="Genomic_DNA"/>
</dbReference>
<dbReference type="EMBL" id="AL161559">
    <property type="protein sequence ID" value="CAB79296.1"/>
    <property type="status" value="ALT_SEQ"/>
    <property type="molecule type" value="Genomic_DNA"/>
</dbReference>
<dbReference type="EMBL" id="CP002687">
    <property type="protein sequence ID" value="AEE84749.1"/>
    <property type="molecule type" value="Genomic_DNA"/>
</dbReference>
<dbReference type="EMBL" id="BT003875">
    <property type="protein sequence ID" value="AAO41924.1"/>
    <property type="molecule type" value="mRNA"/>
</dbReference>
<dbReference type="EMBL" id="BT008602">
    <property type="protein sequence ID" value="AAP40427.1"/>
    <property type="molecule type" value="mRNA"/>
</dbReference>
<dbReference type="PIR" id="H85268">
    <property type="entry name" value="H85268"/>
</dbReference>
<dbReference type="PIR" id="T05379">
    <property type="entry name" value="T05379"/>
</dbReference>
<dbReference type="RefSeq" id="NP_194072.3">
    <property type="nucleotide sequence ID" value="NM_118470.4"/>
</dbReference>
<dbReference type="FunCoup" id="Q84WF6">
    <property type="interactions" value="116"/>
</dbReference>
<dbReference type="STRING" id="3702.Q84WF6"/>
<dbReference type="PaxDb" id="3702-AT4G23410.1"/>
<dbReference type="EnsemblPlants" id="AT4G23410.1">
    <property type="protein sequence ID" value="AT4G23410.1"/>
    <property type="gene ID" value="AT4G23410"/>
</dbReference>
<dbReference type="GeneID" id="828440"/>
<dbReference type="Gramene" id="AT4G23410.1">
    <property type="protein sequence ID" value="AT4G23410.1"/>
    <property type="gene ID" value="AT4G23410"/>
</dbReference>
<dbReference type="KEGG" id="ath:AT4G23410"/>
<dbReference type="Araport" id="AT4G23410"/>
<dbReference type="TAIR" id="AT4G23410">
    <property type="gene designation" value="TET5"/>
</dbReference>
<dbReference type="eggNOG" id="ENOG502QT0N">
    <property type="taxonomic scope" value="Eukaryota"/>
</dbReference>
<dbReference type="HOGENOM" id="CLU_066970_0_0_1"/>
<dbReference type="InParanoid" id="Q84WF6"/>
<dbReference type="OMA" id="TSCENFF"/>
<dbReference type="OrthoDB" id="620353at2759"/>
<dbReference type="PRO" id="PR:Q84WF6"/>
<dbReference type="Proteomes" id="UP000006548">
    <property type="component" value="Chromosome 4"/>
</dbReference>
<dbReference type="ExpressionAtlas" id="Q84WF6">
    <property type="expression patterns" value="baseline and differential"/>
</dbReference>
<dbReference type="GO" id="GO:0016020">
    <property type="term" value="C:membrane"/>
    <property type="evidence" value="ECO:0007669"/>
    <property type="project" value="UniProtKB-SubCell"/>
</dbReference>
<dbReference type="GO" id="GO:0009734">
    <property type="term" value="P:auxin-activated signaling pathway"/>
    <property type="evidence" value="ECO:0007669"/>
    <property type="project" value="InterPro"/>
</dbReference>
<dbReference type="GO" id="GO:0035265">
    <property type="term" value="P:organ growth"/>
    <property type="evidence" value="ECO:0000316"/>
    <property type="project" value="TAIR"/>
</dbReference>
<dbReference type="InterPro" id="IPR044991">
    <property type="entry name" value="TET_plant"/>
</dbReference>
<dbReference type="InterPro" id="IPR018499">
    <property type="entry name" value="Tetraspanin/Peripherin"/>
</dbReference>
<dbReference type="PANTHER" id="PTHR32191">
    <property type="entry name" value="TETRASPANIN-8-RELATED"/>
    <property type="match status" value="1"/>
</dbReference>
<dbReference type="Pfam" id="PF00335">
    <property type="entry name" value="Tetraspanin"/>
    <property type="match status" value="1"/>
</dbReference>
<protein>
    <recommendedName>
        <fullName>Tetraspanin-5</fullName>
    </recommendedName>
</protein>
<gene>
    <name type="primary">TET5</name>
    <name type="ordered locus">At4g23410</name>
    <name type="ORF">F16G20.110</name>
</gene>
<accession>Q84WF6</accession>
<accession>O81737</accession>
<organism>
    <name type="scientific">Arabidopsis thaliana</name>
    <name type="common">Mouse-ear cress</name>
    <dbReference type="NCBI Taxonomy" id="3702"/>
    <lineage>
        <taxon>Eukaryota</taxon>
        <taxon>Viridiplantae</taxon>
        <taxon>Streptophyta</taxon>
        <taxon>Embryophyta</taxon>
        <taxon>Tracheophyta</taxon>
        <taxon>Spermatophyta</taxon>
        <taxon>Magnoliopsida</taxon>
        <taxon>eudicotyledons</taxon>
        <taxon>Gunneridae</taxon>
        <taxon>Pentapetalae</taxon>
        <taxon>rosids</taxon>
        <taxon>malvids</taxon>
        <taxon>Brassicales</taxon>
        <taxon>Brassicaceae</taxon>
        <taxon>Camelineae</taxon>
        <taxon>Arabidopsis</taxon>
    </lineage>
</organism>
<reference key="1">
    <citation type="journal article" date="1999" name="Nature">
        <title>Sequence and analysis of chromosome 4 of the plant Arabidopsis thaliana.</title>
        <authorList>
            <person name="Mayer K.F.X."/>
            <person name="Schueller C."/>
            <person name="Wambutt R."/>
            <person name="Murphy G."/>
            <person name="Volckaert G."/>
            <person name="Pohl T."/>
            <person name="Duesterhoeft A."/>
            <person name="Stiekema W."/>
            <person name="Entian K.-D."/>
            <person name="Terryn N."/>
            <person name="Harris B."/>
            <person name="Ansorge W."/>
            <person name="Brandt P."/>
            <person name="Grivell L.A."/>
            <person name="Rieger M."/>
            <person name="Weichselgartner M."/>
            <person name="de Simone V."/>
            <person name="Obermaier B."/>
            <person name="Mache R."/>
            <person name="Mueller M."/>
            <person name="Kreis M."/>
            <person name="Delseny M."/>
            <person name="Puigdomenech P."/>
            <person name="Watson M."/>
            <person name="Schmidtheini T."/>
            <person name="Reichert B."/>
            <person name="Portetelle D."/>
            <person name="Perez-Alonso M."/>
            <person name="Boutry M."/>
            <person name="Bancroft I."/>
            <person name="Vos P."/>
            <person name="Hoheisel J."/>
            <person name="Zimmermann W."/>
            <person name="Wedler H."/>
            <person name="Ridley P."/>
            <person name="Langham S.-A."/>
            <person name="McCullagh B."/>
            <person name="Bilham L."/>
            <person name="Robben J."/>
            <person name="van der Schueren J."/>
            <person name="Grymonprez B."/>
            <person name="Chuang Y.-J."/>
            <person name="Vandenbussche F."/>
            <person name="Braeken M."/>
            <person name="Weltjens I."/>
            <person name="Voet M."/>
            <person name="Bastiaens I."/>
            <person name="Aert R."/>
            <person name="Defoor E."/>
            <person name="Weitzenegger T."/>
            <person name="Bothe G."/>
            <person name="Ramsperger U."/>
            <person name="Hilbert H."/>
            <person name="Braun M."/>
            <person name="Holzer E."/>
            <person name="Brandt A."/>
            <person name="Peters S."/>
            <person name="van Staveren M."/>
            <person name="Dirkse W."/>
            <person name="Mooijman P."/>
            <person name="Klein Lankhorst R."/>
            <person name="Rose M."/>
            <person name="Hauf J."/>
            <person name="Koetter P."/>
            <person name="Berneiser S."/>
            <person name="Hempel S."/>
            <person name="Feldpausch M."/>
            <person name="Lamberth S."/>
            <person name="Van den Daele H."/>
            <person name="De Keyser A."/>
            <person name="Buysshaert C."/>
            <person name="Gielen J."/>
            <person name="Villarroel R."/>
            <person name="De Clercq R."/>
            <person name="van Montagu M."/>
            <person name="Rogers J."/>
            <person name="Cronin A."/>
            <person name="Quail M.A."/>
            <person name="Bray-Allen S."/>
            <person name="Clark L."/>
            <person name="Doggett J."/>
            <person name="Hall S."/>
            <person name="Kay M."/>
            <person name="Lennard N."/>
            <person name="McLay K."/>
            <person name="Mayes R."/>
            <person name="Pettett A."/>
            <person name="Rajandream M.A."/>
            <person name="Lyne M."/>
            <person name="Benes V."/>
            <person name="Rechmann S."/>
            <person name="Borkova D."/>
            <person name="Bloecker H."/>
            <person name="Scharfe M."/>
            <person name="Grimm M."/>
            <person name="Loehnert T.-H."/>
            <person name="Dose S."/>
            <person name="de Haan M."/>
            <person name="Maarse A.C."/>
            <person name="Schaefer M."/>
            <person name="Mueller-Auer S."/>
            <person name="Gabel C."/>
            <person name="Fuchs M."/>
            <person name="Fartmann B."/>
            <person name="Granderath K."/>
            <person name="Dauner D."/>
            <person name="Herzl A."/>
            <person name="Neumann S."/>
            <person name="Argiriou A."/>
            <person name="Vitale D."/>
            <person name="Liguori R."/>
            <person name="Piravandi E."/>
            <person name="Massenet O."/>
            <person name="Quigley F."/>
            <person name="Clabauld G."/>
            <person name="Muendlein A."/>
            <person name="Felber R."/>
            <person name="Schnabl S."/>
            <person name="Hiller R."/>
            <person name="Schmidt W."/>
            <person name="Lecharny A."/>
            <person name="Aubourg S."/>
            <person name="Chefdor F."/>
            <person name="Cooke R."/>
            <person name="Berger C."/>
            <person name="Monfort A."/>
            <person name="Casacuberta E."/>
            <person name="Gibbons T."/>
            <person name="Weber N."/>
            <person name="Vandenbol M."/>
            <person name="Bargues M."/>
            <person name="Terol J."/>
            <person name="Torres A."/>
            <person name="Perez-Perez A."/>
            <person name="Purnelle B."/>
            <person name="Bent E."/>
            <person name="Johnson S."/>
            <person name="Tacon D."/>
            <person name="Jesse T."/>
            <person name="Heijnen L."/>
            <person name="Schwarz S."/>
            <person name="Scholler P."/>
            <person name="Heber S."/>
            <person name="Francs P."/>
            <person name="Bielke C."/>
            <person name="Frishman D."/>
            <person name="Haase D."/>
            <person name="Lemcke K."/>
            <person name="Mewes H.-W."/>
            <person name="Stocker S."/>
            <person name="Zaccaria P."/>
            <person name="Bevan M."/>
            <person name="Wilson R.K."/>
            <person name="de la Bastide M."/>
            <person name="Habermann K."/>
            <person name="Parnell L."/>
            <person name="Dedhia N."/>
            <person name="Gnoj L."/>
            <person name="Schutz K."/>
            <person name="Huang E."/>
            <person name="Spiegel L."/>
            <person name="Sekhon M."/>
            <person name="Murray J."/>
            <person name="Sheet P."/>
            <person name="Cordes M."/>
            <person name="Abu-Threideh J."/>
            <person name="Stoneking T."/>
            <person name="Kalicki J."/>
            <person name="Graves T."/>
            <person name="Harmon G."/>
            <person name="Edwards J."/>
            <person name="Latreille P."/>
            <person name="Courtney L."/>
            <person name="Cloud J."/>
            <person name="Abbott A."/>
            <person name="Scott K."/>
            <person name="Johnson D."/>
            <person name="Minx P."/>
            <person name="Bentley D."/>
            <person name="Fulton B."/>
            <person name="Miller N."/>
            <person name="Greco T."/>
            <person name="Kemp K."/>
            <person name="Kramer J."/>
            <person name="Fulton L."/>
            <person name="Mardis E."/>
            <person name="Dante M."/>
            <person name="Pepin K."/>
            <person name="Hillier L.W."/>
            <person name="Nelson J."/>
            <person name="Spieth J."/>
            <person name="Ryan E."/>
            <person name="Andrews S."/>
            <person name="Geisel C."/>
            <person name="Layman D."/>
            <person name="Du H."/>
            <person name="Ali J."/>
            <person name="Berghoff A."/>
            <person name="Jones K."/>
            <person name="Drone K."/>
            <person name="Cotton M."/>
            <person name="Joshu C."/>
            <person name="Antonoiu B."/>
            <person name="Zidanic M."/>
            <person name="Strong C."/>
            <person name="Sun H."/>
            <person name="Lamar B."/>
            <person name="Yordan C."/>
            <person name="Ma P."/>
            <person name="Zhong J."/>
            <person name="Preston R."/>
            <person name="Vil D."/>
            <person name="Shekher M."/>
            <person name="Matero A."/>
            <person name="Shah R."/>
            <person name="Swaby I.K."/>
            <person name="O'Shaughnessy A."/>
            <person name="Rodriguez M."/>
            <person name="Hoffman J."/>
            <person name="Till S."/>
            <person name="Granat S."/>
            <person name="Shohdy N."/>
            <person name="Hasegawa A."/>
            <person name="Hameed A."/>
            <person name="Lodhi M."/>
            <person name="Johnson A."/>
            <person name="Chen E."/>
            <person name="Marra M.A."/>
            <person name="Martienssen R."/>
            <person name="McCombie W.R."/>
        </authorList>
    </citation>
    <scope>NUCLEOTIDE SEQUENCE [LARGE SCALE GENOMIC DNA]</scope>
    <source>
        <strain>cv. Columbia</strain>
    </source>
</reference>
<reference key="2">
    <citation type="journal article" date="2017" name="Plant J.">
        <title>Araport11: a complete reannotation of the Arabidopsis thaliana reference genome.</title>
        <authorList>
            <person name="Cheng C.Y."/>
            <person name="Krishnakumar V."/>
            <person name="Chan A.P."/>
            <person name="Thibaud-Nissen F."/>
            <person name="Schobel S."/>
            <person name="Town C.D."/>
        </authorList>
    </citation>
    <scope>GENOME REANNOTATION</scope>
    <source>
        <strain>cv. Columbia</strain>
    </source>
</reference>
<reference key="3">
    <citation type="journal article" date="2003" name="Science">
        <title>Empirical analysis of transcriptional activity in the Arabidopsis genome.</title>
        <authorList>
            <person name="Yamada K."/>
            <person name="Lim J."/>
            <person name="Dale J.M."/>
            <person name="Chen H."/>
            <person name="Shinn P."/>
            <person name="Palm C.J."/>
            <person name="Southwick A.M."/>
            <person name="Wu H.C."/>
            <person name="Kim C.J."/>
            <person name="Nguyen M."/>
            <person name="Pham P.K."/>
            <person name="Cheuk R.F."/>
            <person name="Karlin-Newmann G."/>
            <person name="Liu S.X."/>
            <person name="Lam B."/>
            <person name="Sakano H."/>
            <person name="Wu T."/>
            <person name="Yu G."/>
            <person name="Miranda M."/>
            <person name="Quach H.L."/>
            <person name="Tripp M."/>
            <person name="Chang C.H."/>
            <person name="Lee J.M."/>
            <person name="Toriumi M.J."/>
            <person name="Chan M.M."/>
            <person name="Tang C.C."/>
            <person name="Onodera C.S."/>
            <person name="Deng J.M."/>
            <person name="Akiyama K."/>
            <person name="Ansari Y."/>
            <person name="Arakawa T."/>
            <person name="Banh J."/>
            <person name="Banno F."/>
            <person name="Bowser L."/>
            <person name="Brooks S.Y."/>
            <person name="Carninci P."/>
            <person name="Chao Q."/>
            <person name="Choy N."/>
            <person name="Enju A."/>
            <person name="Goldsmith A.D."/>
            <person name="Gurjal M."/>
            <person name="Hansen N.F."/>
            <person name="Hayashizaki Y."/>
            <person name="Johnson-Hopson C."/>
            <person name="Hsuan V.W."/>
            <person name="Iida K."/>
            <person name="Karnes M."/>
            <person name="Khan S."/>
            <person name="Koesema E."/>
            <person name="Ishida J."/>
            <person name="Jiang P.X."/>
            <person name="Jones T."/>
            <person name="Kawai J."/>
            <person name="Kamiya A."/>
            <person name="Meyers C."/>
            <person name="Nakajima M."/>
            <person name="Narusaka M."/>
            <person name="Seki M."/>
            <person name="Sakurai T."/>
            <person name="Satou M."/>
            <person name="Tamse R."/>
            <person name="Vaysberg M."/>
            <person name="Wallender E.K."/>
            <person name="Wong C."/>
            <person name="Yamamura Y."/>
            <person name="Yuan S."/>
            <person name="Shinozaki K."/>
            <person name="Davis R.W."/>
            <person name="Theologis A."/>
            <person name="Ecker J.R."/>
        </authorList>
    </citation>
    <scope>NUCLEOTIDE SEQUENCE [LARGE SCALE MRNA]</scope>
    <source>
        <strain>cv. Columbia</strain>
    </source>
</reference>
<name>TET5_ARATH</name>